<protein>
    <recommendedName>
        <fullName evidence="1">Iron-sulfur cluster repair protein YtfE</fullName>
    </recommendedName>
</protein>
<organism>
    <name type="scientific">Shigella dysenteriae serotype 1 (strain Sd197)</name>
    <dbReference type="NCBI Taxonomy" id="300267"/>
    <lineage>
        <taxon>Bacteria</taxon>
        <taxon>Pseudomonadati</taxon>
        <taxon>Pseudomonadota</taxon>
        <taxon>Gammaproteobacteria</taxon>
        <taxon>Enterobacterales</taxon>
        <taxon>Enterobacteriaceae</taxon>
        <taxon>Shigella</taxon>
    </lineage>
</organism>
<keyword id="KW-0963">Cytoplasm</keyword>
<keyword id="KW-0408">Iron</keyword>
<keyword id="KW-0479">Metal-binding</keyword>
<keyword id="KW-1185">Reference proteome</keyword>
<keyword id="KW-0346">Stress response</keyword>
<gene>
    <name evidence="1" type="primary">ytfE</name>
    <name type="ordered locus">SDY_4379</name>
</gene>
<evidence type="ECO:0000255" key="1">
    <source>
        <dbReference type="HAMAP-Rule" id="MF_01606"/>
    </source>
</evidence>
<accession>Q328I9</accession>
<proteinExistence type="inferred from homology"/>
<feature type="chain" id="PRO_0000291701" description="Iron-sulfur cluster repair protein YtfE">
    <location>
        <begin position="1"/>
        <end position="220"/>
    </location>
</feature>
<name>YTFE_SHIDS</name>
<reference key="1">
    <citation type="journal article" date="2005" name="Nucleic Acids Res.">
        <title>Genome dynamics and diversity of Shigella species, the etiologic agents of bacillary dysentery.</title>
        <authorList>
            <person name="Yang F."/>
            <person name="Yang J."/>
            <person name="Zhang X."/>
            <person name="Chen L."/>
            <person name="Jiang Y."/>
            <person name="Yan Y."/>
            <person name="Tang X."/>
            <person name="Wang J."/>
            <person name="Xiong Z."/>
            <person name="Dong J."/>
            <person name="Xue Y."/>
            <person name="Zhu Y."/>
            <person name="Xu X."/>
            <person name="Sun L."/>
            <person name="Chen S."/>
            <person name="Nie H."/>
            <person name="Peng J."/>
            <person name="Xu J."/>
            <person name="Wang Y."/>
            <person name="Yuan Z."/>
            <person name="Wen Y."/>
            <person name="Yao Z."/>
            <person name="Shen Y."/>
            <person name="Qiang B."/>
            <person name="Hou Y."/>
            <person name="Yu J."/>
            <person name="Jin Q."/>
        </authorList>
    </citation>
    <scope>NUCLEOTIDE SEQUENCE [LARGE SCALE GENOMIC DNA]</scope>
    <source>
        <strain>Sd197</strain>
    </source>
</reference>
<dbReference type="EMBL" id="CP000034">
    <property type="protein sequence ID" value="ABB64266.1"/>
    <property type="molecule type" value="Genomic_DNA"/>
</dbReference>
<dbReference type="RefSeq" id="WP_000331456.1">
    <property type="nucleotide sequence ID" value="NC_007606.1"/>
</dbReference>
<dbReference type="RefSeq" id="YP_405757.1">
    <property type="nucleotide sequence ID" value="NC_007606.1"/>
</dbReference>
<dbReference type="SMR" id="Q328I9"/>
<dbReference type="STRING" id="300267.SDY_4379"/>
<dbReference type="EnsemblBacteria" id="ABB64266">
    <property type="protein sequence ID" value="ABB64266"/>
    <property type="gene ID" value="SDY_4379"/>
</dbReference>
<dbReference type="GeneID" id="93777612"/>
<dbReference type="KEGG" id="sdy:SDY_4379"/>
<dbReference type="PATRIC" id="fig|300267.13.peg.5171"/>
<dbReference type="HOGENOM" id="CLU_076075_2_0_6"/>
<dbReference type="Proteomes" id="UP000002716">
    <property type="component" value="Chromosome"/>
</dbReference>
<dbReference type="GO" id="GO:0005737">
    <property type="term" value="C:cytoplasm"/>
    <property type="evidence" value="ECO:0007669"/>
    <property type="project" value="UniProtKB-SubCell"/>
</dbReference>
<dbReference type="GO" id="GO:0046872">
    <property type="term" value="F:metal ion binding"/>
    <property type="evidence" value="ECO:0007669"/>
    <property type="project" value="UniProtKB-KW"/>
</dbReference>
<dbReference type="GO" id="GO:0030091">
    <property type="term" value="P:protein repair"/>
    <property type="evidence" value="ECO:0007669"/>
    <property type="project" value="UniProtKB-UniRule"/>
</dbReference>
<dbReference type="GO" id="GO:0051409">
    <property type="term" value="P:response to nitrosative stress"/>
    <property type="evidence" value="ECO:0007669"/>
    <property type="project" value="UniProtKB-UniRule"/>
</dbReference>
<dbReference type="GO" id="GO:0006979">
    <property type="term" value="P:response to oxidative stress"/>
    <property type="evidence" value="ECO:0007669"/>
    <property type="project" value="UniProtKB-UniRule"/>
</dbReference>
<dbReference type="CDD" id="cd12108">
    <property type="entry name" value="Hr-like"/>
    <property type="match status" value="1"/>
</dbReference>
<dbReference type="FunFam" id="1.20.120.520:FF:000001">
    <property type="entry name" value="Iron-sulfur cluster repair protein YtfE"/>
    <property type="match status" value="1"/>
</dbReference>
<dbReference type="Gene3D" id="1.20.120.520">
    <property type="entry name" value="nmb1532 protein domain like"/>
    <property type="match status" value="1"/>
</dbReference>
<dbReference type="HAMAP" id="MF_01606">
    <property type="entry name" value="RIC_YtfE"/>
    <property type="match status" value="1"/>
</dbReference>
<dbReference type="InterPro" id="IPR023742">
    <property type="entry name" value="FeS-repair_YftE"/>
</dbReference>
<dbReference type="InterPro" id="IPR012312">
    <property type="entry name" value="Hemerythrin-like"/>
</dbReference>
<dbReference type="InterPro" id="IPR019903">
    <property type="entry name" value="RIC_family"/>
</dbReference>
<dbReference type="NCBIfam" id="TIGR03652">
    <property type="entry name" value="FeS_repair_RIC"/>
    <property type="match status" value="1"/>
</dbReference>
<dbReference type="NCBIfam" id="NF008221">
    <property type="entry name" value="PRK10992.1"/>
    <property type="match status" value="1"/>
</dbReference>
<dbReference type="PANTHER" id="PTHR36438">
    <property type="entry name" value="IRON-SULFUR CLUSTER REPAIR PROTEIN YTFE"/>
    <property type="match status" value="1"/>
</dbReference>
<dbReference type="PANTHER" id="PTHR36438:SF1">
    <property type="entry name" value="IRON-SULFUR CLUSTER REPAIR PROTEIN YTFE"/>
    <property type="match status" value="1"/>
</dbReference>
<dbReference type="Pfam" id="PF01814">
    <property type="entry name" value="Hemerythrin"/>
    <property type="match status" value="1"/>
</dbReference>
<dbReference type="Pfam" id="PF04405">
    <property type="entry name" value="ScdA_N"/>
    <property type="match status" value="1"/>
</dbReference>
<comment type="function">
    <text evidence="1">Di-iron-containing protein involved in the repair of iron-sulfur clusters damaged by oxidative and nitrosative stress conditions.</text>
</comment>
<comment type="subunit">
    <text evidence="1">Homodimer.</text>
</comment>
<comment type="subcellular location">
    <subcellularLocation>
        <location evidence="1">Cytoplasm</location>
    </subcellularLocation>
</comment>
<comment type="similarity">
    <text evidence="1">Belongs to the RIC family. YtfE subfamily.</text>
</comment>
<sequence length="220" mass="24883">MAYRDQPLGELALSIPRASALFRKYDMDYCCGGKQTLARAAARKELDVEVIEAELAKLAEQPIEKDWRSAPLAEIIDHIIVRYHDRHREQLPELILQATKVERVHADKPSVPKGLTKYLTMLHEELSSHMMKEEQILFPMIKQGMGSQAMGPISVMESEHDEAGELLEVIKHTTNNVTPPPEACTTWKAMYNGINELIDDLMDHISLENNVLFPRALAGE</sequence>